<accession>O83168</accession>
<sequence>MEPRMSGSNLRFPYSRAYGGAGVGRNFEKSSRFSVQKEGIGAPGSARTALQFKLFLLSRLFFIFTSHIP</sequence>
<gene>
    <name type="ordered locus">TP_0132</name>
</gene>
<feature type="chain" id="PRO_0000202196" description="Uncharacterized protein TP_0132">
    <location>
        <begin position="1"/>
        <end position="69"/>
    </location>
</feature>
<reference key="1">
    <citation type="journal article" date="1998" name="Science">
        <title>Complete genome sequence of Treponema pallidum, the syphilis spirochete.</title>
        <authorList>
            <person name="Fraser C.M."/>
            <person name="Norris S.J."/>
            <person name="Weinstock G.M."/>
            <person name="White O."/>
            <person name="Sutton G.G."/>
            <person name="Dodson R.J."/>
            <person name="Gwinn M.L."/>
            <person name="Hickey E.K."/>
            <person name="Clayton R.A."/>
            <person name="Ketchum K.A."/>
            <person name="Sodergren E."/>
            <person name="Hardham J.M."/>
            <person name="McLeod M.P."/>
            <person name="Salzberg S.L."/>
            <person name="Peterson J.D."/>
            <person name="Khalak H.G."/>
            <person name="Richardson D.L."/>
            <person name="Howell J.K."/>
            <person name="Chidambaram M."/>
            <person name="Utterback T.R."/>
            <person name="McDonald L.A."/>
            <person name="Artiach P."/>
            <person name="Bowman C."/>
            <person name="Cotton M.D."/>
            <person name="Fujii C."/>
            <person name="Garland S.A."/>
            <person name="Hatch B."/>
            <person name="Horst K."/>
            <person name="Roberts K.M."/>
            <person name="Sandusky M."/>
            <person name="Weidman J.F."/>
            <person name="Smith H.O."/>
            <person name="Venter J.C."/>
        </authorList>
    </citation>
    <scope>NUCLEOTIDE SEQUENCE [LARGE SCALE GENOMIC DNA]</scope>
    <source>
        <strain>Nichols</strain>
    </source>
</reference>
<protein>
    <recommendedName>
        <fullName>Uncharacterized protein TP_0132</fullName>
    </recommendedName>
</protein>
<proteinExistence type="predicted"/>
<dbReference type="EMBL" id="AE000520">
    <property type="protein sequence ID" value="AAC65123.1"/>
    <property type="molecule type" value="Genomic_DNA"/>
</dbReference>
<dbReference type="PIR" id="A71363">
    <property type="entry name" value="A71363"/>
</dbReference>
<dbReference type="IntAct" id="O83168">
    <property type="interactions" value="36"/>
</dbReference>
<dbReference type="STRING" id="243276.TP_0132"/>
<dbReference type="EnsemblBacteria" id="AAC65123">
    <property type="protein sequence ID" value="AAC65123"/>
    <property type="gene ID" value="TP_0132"/>
</dbReference>
<dbReference type="KEGG" id="tpa:TP_0132"/>
<dbReference type="PATRIC" id="fig|243276.5.peg.141"/>
<dbReference type="HOGENOM" id="CLU_2866500_0_0_12"/>
<dbReference type="Proteomes" id="UP000000811">
    <property type="component" value="Chromosome"/>
</dbReference>
<keyword id="KW-1185">Reference proteome</keyword>
<name>Y132_TREPA</name>
<organism>
    <name type="scientific">Treponema pallidum (strain Nichols)</name>
    <dbReference type="NCBI Taxonomy" id="243276"/>
    <lineage>
        <taxon>Bacteria</taxon>
        <taxon>Pseudomonadati</taxon>
        <taxon>Spirochaetota</taxon>
        <taxon>Spirochaetia</taxon>
        <taxon>Spirochaetales</taxon>
        <taxon>Treponemataceae</taxon>
        <taxon>Treponema</taxon>
    </lineage>
</organism>